<evidence type="ECO:0000255" key="1">
    <source>
        <dbReference type="HAMAP-Rule" id="MF_01337"/>
    </source>
</evidence>
<evidence type="ECO:0000305" key="2"/>
<protein>
    <recommendedName>
        <fullName evidence="1">Large ribosomal subunit protein uL18</fullName>
    </recommendedName>
    <alternativeName>
        <fullName evidence="2">50S ribosomal protein L18</fullName>
    </alternativeName>
</protein>
<dbReference type="EMBL" id="CP000233">
    <property type="protein sequence ID" value="ABE00223.1"/>
    <property type="molecule type" value="Genomic_DNA"/>
</dbReference>
<dbReference type="RefSeq" id="YP_536306.1">
    <property type="nucleotide sequence ID" value="NC_007929.1"/>
</dbReference>
<dbReference type="SMR" id="Q1WSA6"/>
<dbReference type="STRING" id="362948.LSL_1419"/>
<dbReference type="KEGG" id="lsl:LSL_1419"/>
<dbReference type="PATRIC" id="fig|362948.14.peg.1502"/>
<dbReference type="HOGENOM" id="CLU_098841_0_1_9"/>
<dbReference type="OrthoDB" id="9810939at2"/>
<dbReference type="Proteomes" id="UP000006559">
    <property type="component" value="Chromosome"/>
</dbReference>
<dbReference type="GO" id="GO:0022625">
    <property type="term" value="C:cytosolic large ribosomal subunit"/>
    <property type="evidence" value="ECO:0007669"/>
    <property type="project" value="TreeGrafter"/>
</dbReference>
<dbReference type="GO" id="GO:0008097">
    <property type="term" value="F:5S rRNA binding"/>
    <property type="evidence" value="ECO:0007669"/>
    <property type="project" value="TreeGrafter"/>
</dbReference>
<dbReference type="GO" id="GO:0003735">
    <property type="term" value="F:structural constituent of ribosome"/>
    <property type="evidence" value="ECO:0007669"/>
    <property type="project" value="InterPro"/>
</dbReference>
<dbReference type="GO" id="GO:0006412">
    <property type="term" value="P:translation"/>
    <property type="evidence" value="ECO:0007669"/>
    <property type="project" value="UniProtKB-UniRule"/>
</dbReference>
<dbReference type="CDD" id="cd00432">
    <property type="entry name" value="Ribosomal_L18_L5e"/>
    <property type="match status" value="1"/>
</dbReference>
<dbReference type="FunFam" id="3.30.420.100:FF:000001">
    <property type="entry name" value="50S ribosomal protein L18"/>
    <property type="match status" value="1"/>
</dbReference>
<dbReference type="Gene3D" id="3.30.420.100">
    <property type="match status" value="1"/>
</dbReference>
<dbReference type="HAMAP" id="MF_01337_B">
    <property type="entry name" value="Ribosomal_uL18_B"/>
    <property type="match status" value="1"/>
</dbReference>
<dbReference type="InterPro" id="IPR004389">
    <property type="entry name" value="Ribosomal_uL18_bac-type"/>
</dbReference>
<dbReference type="InterPro" id="IPR005484">
    <property type="entry name" value="Ribosomal_uL18_bac/euk"/>
</dbReference>
<dbReference type="NCBIfam" id="TIGR00060">
    <property type="entry name" value="L18_bact"/>
    <property type="match status" value="1"/>
</dbReference>
<dbReference type="PANTHER" id="PTHR12899">
    <property type="entry name" value="39S RIBOSOMAL PROTEIN L18, MITOCHONDRIAL"/>
    <property type="match status" value="1"/>
</dbReference>
<dbReference type="PANTHER" id="PTHR12899:SF3">
    <property type="entry name" value="LARGE RIBOSOMAL SUBUNIT PROTEIN UL18M"/>
    <property type="match status" value="1"/>
</dbReference>
<dbReference type="Pfam" id="PF00861">
    <property type="entry name" value="Ribosomal_L18p"/>
    <property type="match status" value="1"/>
</dbReference>
<dbReference type="SUPFAM" id="SSF53137">
    <property type="entry name" value="Translational machinery components"/>
    <property type="match status" value="1"/>
</dbReference>
<reference key="1">
    <citation type="journal article" date="2006" name="Proc. Natl. Acad. Sci. U.S.A.">
        <title>Multireplicon genome architecture of Lactobacillus salivarius.</title>
        <authorList>
            <person name="Claesson M.J."/>
            <person name="Li Y."/>
            <person name="Leahy S."/>
            <person name="Canchaya C."/>
            <person name="van Pijkeren J.P."/>
            <person name="Cerdeno-Tarraga A.M."/>
            <person name="Parkhill J."/>
            <person name="Flynn S."/>
            <person name="O'Sullivan G.C."/>
            <person name="Collins J.K."/>
            <person name="Higgins D."/>
            <person name="Shanahan F."/>
            <person name="Fitzgerald G.F."/>
            <person name="van Sinderen D."/>
            <person name="O'Toole P.W."/>
        </authorList>
    </citation>
    <scope>NUCLEOTIDE SEQUENCE [LARGE SCALE GENOMIC DNA]</scope>
    <source>
        <strain>UCC118</strain>
    </source>
</reference>
<comment type="function">
    <text evidence="1">This is one of the proteins that bind and probably mediate the attachment of the 5S RNA into the large ribosomal subunit, where it forms part of the central protuberance.</text>
</comment>
<comment type="subunit">
    <text evidence="1">Part of the 50S ribosomal subunit; part of the 5S rRNA/L5/L18/L25 subcomplex. Contacts the 5S and 23S rRNAs.</text>
</comment>
<comment type="similarity">
    <text evidence="1">Belongs to the universal ribosomal protein uL18 family.</text>
</comment>
<accession>Q1WSA6</accession>
<proteinExistence type="inferred from homology"/>
<gene>
    <name evidence="1" type="primary">rplR</name>
    <name type="ordered locus">LSL_1419</name>
</gene>
<organism>
    <name type="scientific">Ligilactobacillus salivarius (strain UCC118)</name>
    <name type="common">Lactobacillus salivarius</name>
    <dbReference type="NCBI Taxonomy" id="362948"/>
    <lineage>
        <taxon>Bacteria</taxon>
        <taxon>Bacillati</taxon>
        <taxon>Bacillota</taxon>
        <taxon>Bacilli</taxon>
        <taxon>Lactobacillales</taxon>
        <taxon>Lactobacillaceae</taxon>
        <taxon>Ligilactobacillus</taxon>
    </lineage>
</organism>
<sequence>MISKPDKNKTRQKRHARVRGKISGTAECPRLNVYRSNKNIYAQVIDDVAGVTLVSASTLDSEVSGNTKTEQASSVGAVVAKRAVEKGIKEVVFDRGGYLYHGRVQALAEAARENGLDF</sequence>
<feature type="chain" id="PRO_0000251323" description="Large ribosomal subunit protein uL18">
    <location>
        <begin position="1"/>
        <end position="118"/>
    </location>
</feature>
<keyword id="KW-1185">Reference proteome</keyword>
<keyword id="KW-0687">Ribonucleoprotein</keyword>
<keyword id="KW-0689">Ribosomal protein</keyword>
<keyword id="KW-0694">RNA-binding</keyword>
<keyword id="KW-0699">rRNA-binding</keyword>
<name>RL18_LIGS1</name>